<name>NAGB_ALKOO</name>
<reference key="1">
    <citation type="submission" date="2007-10" db="EMBL/GenBank/DDBJ databases">
        <title>Complete genome of Alkaliphilus oremlandii OhILAs.</title>
        <authorList>
            <person name="Copeland A."/>
            <person name="Lucas S."/>
            <person name="Lapidus A."/>
            <person name="Barry K."/>
            <person name="Detter J.C."/>
            <person name="Glavina del Rio T."/>
            <person name="Hammon N."/>
            <person name="Israni S."/>
            <person name="Dalin E."/>
            <person name="Tice H."/>
            <person name="Pitluck S."/>
            <person name="Chain P."/>
            <person name="Malfatti S."/>
            <person name="Shin M."/>
            <person name="Vergez L."/>
            <person name="Schmutz J."/>
            <person name="Larimer F."/>
            <person name="Land M."/>
            <person name="Hauser L."/>
            <person name="Kyrpides N."/>
            <person name="Mikhailova N."/>
            <person name="Stolz J.F."/>
            <person name="Dawson A."/>
            <person name="Fisher E."/>
            <person name="Crable B."/>
            <person name="Perera E."/>
            <person name="Lisak J."/>
            <person name="Ranganathan M."/>
            <person name="Basu P."/>
            <person name="Richardson P."/>
        </authorList>
    </citation>
    <scope>NUCLEOTIDE SEQUENCE [LARGE SCALE GENOMIC DNA]</scope>
    <source>
        <strain>OhILAs</strain>
    </source>
</reference>
<gene>
    <name evidence="1" type="primary">nagB</name>
    <name type="ordered locus">Clos_2224</name>
</gene>
<proteinExistence type="inferred from homology"/>
<protein>
    <recommendedName>
        <fullName evidence="1">Glucosamine-6-phosphate deaminase</fullName>
        <ecNumber evidence="1">3.5.99.6</ecNumber>
    </recommendedName>
    <alternativeName>
        <fullName evidence="1">GlcN6P deaminase</fullName>
        <shortName evidence="1">GNPDA</shortName>
    </alternativeName>
    <alternativeName>
        <fullName evidence="1">Glucosamine-6-phosphate isomerase</fullName>
    </alternativeName>
</protein>
<sequence>MIIHVEENYEAMSKKAALIVASQVVSNPAGVLGLATGSTPAGMYKELVDLFKEGIIDFSQITTFNLDEYYGLPKTNESSYYTYMMENLFNHINVPLERVHIPNGMAEDVEKECLAYEEKIRNAGGIDLQILGIGANGHIGFNEPDHKLSMKTHLVELTEKTIQDNSRFFQKEEDVPTKALSMGIGTILGAKKIILMANGKNKAEAIKEMTNGYLNPMVPASMIQAHPDVILIIDKEAASLL</sequence>
<organism>
    <name type="scientific">Alkaliphilus oremlandii (strain OhILAs)</name>
    <name type="common">Clostridium oremlandii (strain OhILAs)</name>
    <dbReference type="NCBI Taxonomy" id="350688"/>
    <lineage>
        <taxon>Bacteria</taxon>
        <taxon>Bacillati</taxon>
        <taxon>Bacillota</taxon>
        <taxon>Clostridia</taxon>
        <taxon>Peptostreptococcales</taxon>
        <taxon>Natronincolaceae</taxon>
        <taxon>Alkaliphilus</taxon>
    </lineage>
</organism>
<keyword id="KW-0119">Carbohydrate metabolism</keyword>
<keyword id="KW-0378">Hydrolase</keyword>
<keyword id="KW-1185">Reference proteome</keyword>
<feature type="chain" id="PRO_1000066951" description="Glucosamine-6-phosphate deaminase">
    <location>
        <begin position="1"/>
        <end position="241"/>
    </location>
</feature>
<feature type="active site" description="Proton acceptor; for enolization step" evidence="1">
    <location>
        <position position="67"/>
    </location>
</feature>
<feature type="active site" description="For ring-opening step" evidence="1">
    <location>
        <position position="136"/>
    </location>
</feature>
<feature type="active site" description="Proton acceptor; for ring-opening step" evidence="1">
    <location>
        <position position="138"/>
    </location>
</feature>
<feature type="active site" description="For ring-opening step" evidence="1">
    <location>
        <position position="143"/>
    </location>
</feature>
<comment type="function">
    <text evidence="1">Catalyzes the reversible isomerization-deamination of glucosamine 6-phosphate (GlcN6P) to form fructose 6-phosphate (Fru6P) and ammonium ion.</text>
</comment>
<comment type="catalytic activity">
    <reaction evidence="1">
        <text>alpha-D-glucosamine 6-phosphate + H2O = beta-D-fructose 6-phosphate + NH4(+)</text>
        <dbReference type="Rhea" id="RHEA:12172"/>
        <dbReference type="ChEBI" id="CHEBI:15377"/>
        <dbReference type="ChEBI" id="CHEBI:28938"/>
        <dbReference type="ChEBI" id="CHEBI:57634"/>
        <dbReference type="ChEBI" id="CHEBI:75989"/>
        <dbReference type="EC" id="3.5.99.6"/>
    </reaction>
</comment>
<comment type="pathway">
    <text evidence="1">Amino-sugar metabolism; N-acetylneuraminate degradation; D-fructose 6-phosphate from N-acetylneuraminate: step 5/5.</text>
</comment>
<comment type="similarity">
    <text evidence="1">Belongs to the glucosamine/galactosamine-6-phosphate isomerase family. NagB subfamily.</text>
</comment>
<accession>A8MIX7</accession>
<evidence type="ECO:0000255" key="1">
    <source>
        <dbReference type="HAMAP-Rule" id="MF_01241"/>
    </source>
</evidence>
<dbReference type="EC" id="3.5.99.6" evidence="1"/>
<dbReference type="EMBL" id="CP000853">
    <property type="protein sequence ID" value="ABW19759.1"/>
    <property type="molecule type" value="Genomic_DNA"/>
</dbReference>
<dbReference type="RefSeq" id="WP_012160068.1">
    <property type="nucleotide sequence ID" value="NC_009922.1"/>
</dbReference>
<dbReference type="SMR" id="A8MIX7"/>
<dbReference type="STRING" id="350688.Clos_2224"/>
<dbReference type="KEGG" id="aoe:Clos_2224"/>
<dbReference type="eggNOG" id="COG0363">
    <property type="taxonomic scope" value="Bacteria"/>
</dbReference>
<dbReference type="HOGENOM" id="CLU_049611_1_1_9"/>
<dbReference type="OrthoDB" id="9791139at2"/>
<dbReference type="UniPathway" id="UPA00629">
    <property type="reaction ID" value="UER00684"/>
</dbReference>
<dbReference type="Proteomes" id="UP000000269">
    <property type="component" value="Chromosome"/>
</dbReference>
<dbReference type="GO" id="GO:0005737">
    <property type="term" value="C:cytoplasm"/>
    <property type="evidence" value="ECO:0007669"/>
    <property type="project" value="TreeGrafter"/>
</dbReference>
<dbReference type="GO" id="GO:0004342">
    <property type="term" value="F:glucosamine-6-phosphate deaminase activity"/>
    <property type="evidence" value="ECO:0007669"/>
    <property type="project" value="UniProtKB-UniRule"/>
</dbReference>
<dbReference type="GO" id="GO:0042802">
    <property type="term" value="F:identical protein binding"/>
    <property type="evidence" value="ECO:0007669"/>
    <property type="project" value="TreeGrafter"/>
</dbReference>
<dbReference type="GO" id="GO:0005975">
    <property type="term" value="P:carbohydrate metabolic process"/>
    <property type="evidence" value="ECO:0007669"/>
    <property type="project" value="InterPro"/>
</dbReference>
<dbReference type="GO" id="GO:0006043">
    <property type="term" value="P:glucosamine catabolic process"/>
    <property type="evidence" value="ECO:0007669"/>
    <property type="project" value="TreeGrafter"/>
</dbReference>
<dbReference type="GO" id="GO:0006046">
    <property type="term" value="P:N-acetylglucosamine catabolic process"/>
    <property type="evidence" value="ECO:0007669"/>
    <property type="project" value="TreeGrafter"/>
</dbReference>
<dbReference type="GO" id="GO:0019262">
    <property type="term" value="P:N-acetylneuraminate catabolic process"/>
    <property type="evidence" value="ECO:0007669"/>
    <property type="project" value="UniProtKB-UniRule"/>
</dbReference>
<dbReference type="CDD" id="cd01399">
    <property type="entry name" value="GlcN6P_deaminase"/>
    <property type="match status" value="1"/>
</dbReference>
<dbReference type="FunFam" id="3.40.50.1360:FF:000003">
    <property type="entry name" value="Glucosamine-6-phosphate deaminase"/>
    <property type="match status" value="1"/>
</dbReference>
<dbReference type="Gene3D" id="3.40.50.1360">
    <property type="match status" value="1"/>
</dbReference>
<dbReference type="HAMAP" id="MF_01241">
    <property type="entry name" value="GlcN6P_deamin"/>
    <property type="match status" value="1"/>
</dbReference>
<dbReference type="InterPro" id="IPR006148">
    <property type="entry name" value="Glc/Gal-6P_isomerase"/>
</dbReference>
<dbReference type="InterPro" id="IPR004547">
    <property type="entry name" value="Glucosamine6P_isomerase"/>
</dbReference>
<dbReference type="InterPro" id="IPR018321">
    <property type="entry name" value="Glucosamine6P_isomerase_CS"/>
</dbReference>
<dbReference type="InterPro" id="IPR037171">
    <property type="entry name" value="NagB/RpiA_transferase-like"/>
</dbReference>
<dbReference type="NCBIfam" id="TIGR00502">
    <property type="entry name" value="nagB"/>
    <property type="match status" value="1"/>
</dbReference>
<dbReference type="NCBIfam" id="NF001684">
    <property type="entry name" value="PRK00443.1-4"/>
    <property type="match status" value="1"/>
</dbReference>
<dbReference type="PANTHER" id="PTHR11280">
    <property type="entry name" value="GLUCOSAMINE-6-PHOSPHATE ISOMERASE"/>
    <property type="match status" value="1"/>
</dbReference>
<dbReference type="PANTHER" id="PTHR11280:SF5">
    <property type="entry name" value="GLUCOSAMINE-6-PHOSPHATE ISOMERASE"/>
    <property type="match status" value="1"/>
</dbReference>
<dbReference type="Pfam" id="PF01182">
    <property type="entry name" value="Glucosamine_iso"/>
    <property type="match status" value="1"/>
</dbReference>
<dbReference type="SUPFAM" id="SSF100950">
    <property type="entry name" value="NagB/RpiA/CoA transferase-like"/>
    <property type="match status" value="1"/>
</dbReference>
<dbReference type="PROSITE" id="PS01161">
    <property type="entry name" value="GLC_GALNAC_ISOMERASE"/>
    <property type="match status" value="1"/>
</dbReference>